<reference key="1">
    <citation type="journal article" date="2002" name="Nature">
        <title>The genome sequence of Schizosaccharomyces pombe.</title>
        <authorList>
            <person name="Wood V."/>
            <person name="Gwilliam R."/>
            <person name="Rajandream M.A."/>
            <person name="Lyne M.H."/>
            <person name="Lyne R."/>
            <person name="Stewart A."/>
            <person name="Sgouros J.G."/>
            <person name="Peat N."/>
            <person name="Hayles J."/>
            <person name="Baker S.G."/>
            <person name="Basham D."/>
            <person name="Bowman S."/>
            <person name="Brooks K."/>
            <person name="Brown D."/>
            <person name="Brown S."/>
            <person name="Chillingworth T."/>
            <person name="Churcher C.M."/>
            <person name="Collins M."/>
            <person name="Connor R."/>
            <person name="Cronin A."/>
            <person name="Davis P."/>
            <person name="Feltwell T."/>
            <person name="Fraser A."/>
            <person name="Gentles S."/>
            <person name="Goble A."/>
            <person name="Hamlin N."/>
            <person name="Harris D.E."/>
            <person name="Hidalgo J."/>
            <person name="Hodgson G."/>
            <person name="Holroyd S."/>
            <person name="Hornsby T."/>
            <person name="Howarth S."/>
            <person name="Huckle E.J."/>
            <person name="Hunt S."/>
            <person name="Jagels K."/>
            <person name="James K.D."/>
            <person name="Jones L."/>
            <person name="Jones M."/>
            <person name="Leather S."/>
            <person name="McDonald S."/>
            <person name="McLean J."/>
            <person name="Mooney P."/>
            <person name="Moule S."/>
            <person name="Mungall K.L."/>
            <person name="Murphy L.D."/>
            <person name="Niblett D."/>
            <person name="Odell C."/>
            <person name="Oliver K."/>
            <person name="O'Neil S."/>
            <person name="Pearson D."/>
            <person name="Quail M.A."/>
            <person name="Rabbinowitsch E."/>
            <person name="Rutherford K.M."/>
            <person name="Rutter S."/>
            <person name="Saunders D."/>
            <person name="Seeger K."/>
            <person name="Sharp S."/>
            <person name="Skelton J."/>
            <person name="Simmonds M.N."/>
            <person name="Squares R."/>
            <person name="Squares S."/>
            <person name="Stevens K."/>
            <person name="Taylor K."/>
            <person name="Taylor R.G."/>
            <person name="Tivey A."/>
            <person name="Walsh S.V."/>
            <person name="Warren T."/>
            <person name="Whitehead S."/>
            <person name="Woodward J.R."/>
            <person name="Volckaert G."/>
            <person name="Aert R."/>
            <person name="Robben J."/>
            <person name="Grymonprez B."/>
            <person name="Weltjens I."/>
            <person name="Vanstreels E."/>
            <person name="Rieger M."/>
            <person name="Schaefer M."/>
            <person name="Mueller-Auer S."/>
            <person name="Gabel C."/>
            <person name="Fuchs M."/>
            <person name="Duesterhoeft A."/>
            <person name="Fritzc C."/>
            <person name="Holzer E."/>
            <person name="Moestl D."/>
            <person name="Hilbert H."/>
            <person name="Borzym K."/>
            <person name="Langer I."/>
            <person name="Beck A."/>
            <person name="Lehrach H."/>
            <person name="Reinhardt R."/>
            <person name="Pohl T.M."/>
            <person name="Eger P."/>
            <person name="Zimmermann W."/>
            <person name="Wedler H."/>
            <person name="Wambutt R."/>
            <person name="Purnelle B."/>
            <person name="Goffeau A."/>
            <person name="Cadieu E."/>
            <person name="Dreano S."/>
            <person name="Gloux S."/>
            <person name="Lelaure V."/>
            <person name="Mottier S."/>
            <person name="Galibert F."/>
            <person name="Aves S.J."/>
            <person name="Xiang Z."/>
            <person name="Hunt C."/>
            <person name="Moore K."/>
            <person name="Hurst S.M."/>
            <person name="Lucas M."/>
            <person name="Rochet M."/>
            <person name="Gaillardin C."/>
            <person name="Tallada V.A."/>
            <person name="Garzon A."/>
            <person name="Thode G."/>
            <person name="Daga R.R."/>
            <person name="Cruzado L."/>
            <person name="Jimenez J."/>
            <person name="Sanchez M."/>
            <person name="del Rey F."/>
            <person name="Benito J."/>
            <person name="Dominguez A."/>
            <person name="Revuelta J.L."/>
            <person name="Moreno S."/>
            <person name="Armstrong J."/>
            <person name="Forsburg S.L."/>
            <person name="Cerutti L."/>
            <person name="Lowe T."/>
            <person name="McCombie W.R."/>
            <person name="Paulsen I."/>
            <person name="Potashkin J."/>
            <person name="Shpakovski G.V."/>
            <person name="Ussery D."/>
            <person name="Barrell B.G."/>
            <person name="Nurse P."/>
        </authorList>
    </citation>
    <scope>NUCLEOTIDE SEQUENCE [LARGE SCALE GENOMIC DNA]</scope>
    <source>
        <strain>972 / ATCC 24843</strain>
    </source>
</reference>
<reference key="2">
    <citation type="journal article" date="2005" name="Curr. Biol.">
        <title>A large-scale screen in S. pombe identifies seven novel genes required for critical meiotic events.</title>
        <authorList>
            <person name="Martin-Castellanos C."/>
            <person name="Blanco M."/>
            <person name="Rozalen A.E."/>
            <person name="Perez-Hidalgo L."/>
            <person name="Garcia A.I."/>
            <person name="Conde F."/>
            <person name="Mata J."/>
            <person name="Ellermeier C."/>
            <person name="Davis L."/>
            <person name="San-Segundo P."/>
            <person name="Smith G.R."/>
            <person name="Moreno S."/>
        </authorList>
    </citation>
    <scope>FUNCTION IN MEIOSIS</scope>
</reference>
<reference key="3">
    <citation type="journal article" date="2006" name="Nat. Biotechnol.">
        <title>ORFeome cloning and global analysis of protein localization in the fission yeast Schizosaccharomyces pombe.</title>
        <authorList>
            <person name="Matsuyama A."/>
            <person name="Arai R."/>
            <person name="Yashiroda Y."/>
            <person name="Shirai A."/>
            <person name="Kamata A."/>
            <person name="Sekido S."/>
            <person name="Kobayashi Y."/>
            <person name="Hashimoto A."/>
            <person name="Hamamoto M."/>
            <person name="Hiraoka Y."/>
            <person name="Horinouchi S."/>
            <person name="Yoshida M."/>
        </authorList>
    </citation>
    <scope>SUBCELLULAR LOCATION [LARGE SCALE ANALYSIS]</scope>
</reference>
<reference key="4">
    <citation type="journal article" date="2013" name="PLoS Biol.">
        <title>Quantitative control of protein S-palmitoylation regulates meiotic entry in fission yeast.</title>
        <authorList>
            <person name="Zhang M.M."/>
            <person name="Wu P.Y."/>
            <person name="Kelly F.D."/>
            <person name="Nurse P."/>
            <person name="Hang H.C."/>
        </authorList>
    </citation>
    <scope>FUNCTION</scope>
    <scope>DEVELOPMENTAL STAGE</scope>
    <scope>DISRUPTION PHENOTYPE</scope>
</reference>
<accession>Q10182</accession>
<comment type="function">
    <text evidence="3 5">The erf2-erf4 complex is a palmitoyltransferase with a major role in driving sexual development (PubMed:16303567, PubMed:23843742). Palmitoylates ras1 (PubMed:23843742). Palmitoylates isp3 (PubMed:23843742). Palmitoylates rho3 (PubMed:23843742).</text>
</comment>
<comment type="subunit">
    <text evidence="1">Interacts with erf2.</text>
</comment>
<comment type="subcellular location">
    <subcellularLocation>
        <location evidence="4">Endoplasmic reticulum membrane</location>
        <topology evidence="4">Peripheral membrane protein</topology>
    </subcellularLocation>
</comment>
<comment type="developmental stage">
    <text evidence="5">Expressed during meiosis.</text>
</comment>
<comment type="disruption phenotype">
    <text evidence="5">Abolishes palmitoylation of ras1 during vegetative growth.</text>
</comment>
<comment type="similarity">
    <text evidence="6">Belongs to the ERF4 family.</text>
</comment>
<dbReference type="EMBL" id="CU329670">
    <property type="protein sequence ID" value="CAA93305.1"/>
    <property type="molecule type" value="Genomic_DNA"/>
</dbReference>
<dbReference type="PIR" id="T38708">
    <property type="entry name" value="T38708"/>
</dbReference>
<dbReference type="RefSeq" id="NP_593939.1">
    <property type="nucleotide sequence ID" value="NM_001019367.1"/>
</dbReference>
<dbReference type="SMR" id="Q10182"/>
<dbReference type="BioGRID" id="279545">
    <property type="interactions" value="42"/>
</dbReference>
<dbReference type="FunCoup" id="Q10182">
    <property type="interactions" value="9"/>
</dbReference>
<dbReference type="STRING" id="284812.Q10182"/>
<dbReference type="PaxDb" id="4896-SPAC3F10.07c.1"/>
<dbReference type="EnsemblFungi" id="SPAC3F10.07c.1">
    <property type="protein sequence ID" value="SPAC3F10.07c.1:pep"/>
    <property type="gene ID" value="SPAC3F10.07c"/>
</dbReference>
<dbReference type="GeneID" id="2543113"/>
<dbReference type="KEGG" id="spo:2543113"/>
<dbReference type="PomBase" id="SPAC3F10.07c">
    <property type="gene designation" value="erf4"/>
</dbReference>
<dbReference type="VEuPathDB" id="FungiDB:SPAC3F10.07c"/>
<dbReference type="HOGENOM" id="CLU_1556154_0_0_1"/>
<dbReference type="InParanoid" id="Q10182"/>
<dbReference type="OMA" id="YASEFVF"/>
<dbReference type="PhylomeDB" id="Q10182"/>
<dbReference type="Reactome" id="R-SPO-6798695">
    <property type="pathway name" value="Neutrophil degranulation"/>
</dbReference>
<dbReference type="PRO" id="PR:Q10182"/>
<dbReference type="Proteomes" id="UP000002485">
    <property type="component" value="Chromosome I"/>
</dbReference>
<dbReference type="GO" id="GO:0005783">
    <property type="term" value="C:endoplasmic reticulum"/>
    <property type="evidence" value="ECO:0007005"/>
    <property type="project" value="PomBase"/>
</dbReference>
<dbReference type="GO" id="GO:0005789">
    <property type="term" value="C:endoplasmic reticulum membrane"/>
    <property type="evidence" value="ECO:0007669"/>
    <property type="project" value="UniProtKB-SubCell"/>
</dbReference>
<dbReference type="GO" id="GO:0031211">
    <property type="term" value="C:endoplasmic reticulum palmitoyltransferase complex"/>
    <property type="evidence" value="ECO:0000318"/>
    <property type="project" value="GO_Central"/>
</dbReference>
<dbReference type="GO" id="GO:0005794">
    <property type="term" value="C:Golgi apparatus"/>
    <property type="evidence" value="ECO:0000314"/>
    <property type="project" value="PomBase"/>
</dbReference>
<dbReference type="GO" id="GO:0051321">
    <property type="term" value="P:meiotic cell cycle"/>
    <property type="evidence" value="ECO:0007669"/>
    <property type="project" value="UniProtKB-KW"/>
</dbReference>
<dbReference type="GO" id="GO:0006612">
    <property type="term" value="P:protein targeting to membrane"/>
    <property type="evidence" value="ECO:0000318"/>
    <property type="project" value="GO_Central"/>
</dbReference>
<dbReference type="InterPro" id="IPR019383">
    <property type="entry name" value="Golgin_A_7/ERF4"/>
</dbReference>
<dbReference type="InterPro" id="IPR051371">
    <property type="entry name" value="Ras_palmitoyltransferase"/>
</dbReference>
<dbReference type="PANTHER" id="PTHR13254">
    <property type="entry name" value="GOLGI AUTOANTIGEN, GOLGIN SUBFAMILY A, 7"/>
    <property type="match status" value="1"/>
</dbReference>
<dbReference type="PANTHER" id="PTHR13254:SF0">
    <property type="entry name" value="GOLGIN SUBFAMILY A MEMBER 7_ERF4 DOMAIN-CONTAINING PROTEIN"/>
    <property type="match status" value="1"/>
</dbReference>
<dbReference type="Pfam" id="PF10256">
    <property type="entry name" value="Erf4"/>
    <property type="match status" value="1"/>
</dbReference>
<evidence type="ECO:0000250" key="1">
    <source>
        <dbReference type="UniProtKB" id="P41912"/>
    </source>
</evidence>
<evidence type="ECO:0000256" key="2">
    <source>
        <dbReference type="SAM" id="MobiDB-lite"/>
    </source>
</evidence>
<evidence type="ECO:0000269" key="3">
    <source>
    </source>
</evidence>
<evidence type="ECO:0000269" key="4">
    <source>
    </source>
</evidence>
<evidence type="ECO:0000269" key="5">
    <source>
    </source>
</evidence>
<evidence type="ECO:0000305" key="6"/>
<gene>
    <name type="primary">erf4</name>
    <name type="synonym">mug91</name>
    <name type="ORF">SPAC3F10.07c</name>
</gene>
<sequence>MLVRIERDYSVSGDKYPQFPTDYPVPLRAYVNLEDWDVFIHTLNEKLREAFCPWSIGNLLDGILSVLTIYISEFVFGSIHRKRIGAIDLYILDFATQHNLYVASLRNMGFLSLVFHTKETNSKSSTLHSNPYCPEHHSIRTLPSAVTATTSNISTSSSHRSDLPNEWTNSTL</sequence>
<protein>
    <recommendedName>
        <fullName>Ras modification protein erf4</fullName>
    </recommendedName>
    <alternativeName>
        <fullName>Meiotically up-regulated gene 91 protein</fullName>
    </alternativeName>
</protein>
<organism>
    <name type="scientific">Schizosaccharomyces pombe (strain 972 / ATCC 24843)</name>
    <name type="common">Fission yeast</name>
    <dbReference type="NCBI Taxonomy" id="284812"/>
    <lineage>
        <taxon>Eukaryota</taxon>
        <taxon>Fungi</taxon>
        <taxon>Dikarya</taxon>
        <taxon>Ascomycota</taxon>
        <taxon>Taphrinomycotina</taxon>
        <taxon>Schizosaccharomycetes</taxon>
        <taxon>Schizosaccharomycetales</taxon>
        <taxon>Schizosaccharomycetaceae</taxon>
        <taxon>Schizosaccharomyces</taxon>
    </lineage>
</organism>
<feature type="chain" id="PRO_0000213986" description="Ras modification protein erf4">
    <location>
        <begin position="1"/>
        <end position="172"/>
    </location>
</feature>
<feature type="region of interest" description="Disordered" evidence="2">
    <location>
        <begin position="152"/>
        <end position="172"/>
    </location>
</feature>
<proteinExistence type="evidence at protein level"/>
<keyword id="KW-0256">Endoplasmic reticulum</keyword>
<keyword id="KW-0469">Meiosis</keyword>
<keyword id="KW-0472">Membrane</keyword>
<keyword id="KW-1185">Reference proteome</keyword>
<name>ERFD_SCHPO</name>